<evidence type="ECO:0000250" key="1"/>
<evidence type="ECO:0000305" key="2"/>
<dbReference type="EC" id="6.2.1.1"/>
<dbReference type="EMBL" id="M94729">
    <property type="protein sequence ID" value="AAA53586.1"/>
    <property type="molecule type" value="Genomic_DNA"/>
</dbReference>
<dbReference type="PIR" id="S46276">
    <property type="entry name" value="S46276"/>
</dbReference>
<dbReference type="SMR" id="Q01576"/>
<dbReference type="VEuPathDB" id="FungiDB:PHYBLDRAFT_180905"/>
<dbReference type="GO" id="GO:0005829">
    <property type="term" value="C:cytosol"/>
    <property type="evidence" value="ECO:0007669"/>
    <property type="project" value="TreeGrafter"/>
</dbReference>
<dbReference type="GO" id="GO:0003987">
    <property type="term" value="F:acetate-CoA ligase activity"/>
    <property type="evidence" value="ECO:0007669"/>
    <property type="project" value="UniProtKB-EC"/>
</dbReference>
<dbReference type="GO" id="GO:0016208">
    <property type="term" value="F:AMP binding"/>
    <property type="evidence" value="ECO:0007669"/>
    <property type="project" value="InterPro"/>
</dbReference>
<dbReference type="GO" id="GO:0005524">
    <property type="term" value="F:ATP binding"/>
    <property type="evidence" value="ECO:0007669"/>
    <property type="project" value="UniProtKB-KW"/>
</dbReference>
<dbReference type="GO" id="GO:0019427">
    <property type="term" value="P:acetyl-CoA biosynthetic process from acetate"/>
    <property type="evidence" value="ECO:0007669"/>
    <property type="project" value="InterPro"/>
</dbReference>
<dbReference type="CDD" id="cd05966">
    <property type="entry name" value="ACS"/>
    <property type="match status" value="1"/>
</dbReference>
<dbReference type="FunFam" id="3.30.300.30:FF:000004">
    <property type="entry name" value="Acetyl-coenzyme A synthetase"/>
    <property type="match status" value="1"/>
</dbReference>
<dbReference type="FunFam" id="3.40.50.12780:FF:000001">
    <property type="entry name" value="Acetyl-coenzyme A synthetase"/>
    <property type="match status" value="1"/>
</dbReference>
<dbReference type="Gene3D" id="3.30.300.30">
    <property type="match status" value="1"/>
</dbReference>
<dbReference type="Gene3D" id="3.40.50.12780">
    <property type="entry name" value="N-terminal domain of ligase-like"/>
    <property type="match status" value="1"/>
</dbReference>
<dbReference type="InterPro" id="IPR011904">
    <property type="entry name" value="Ac_CoA_lig"/>
</dbReference>
<dbReference type="InterPro" id="IPR032387">
    <property type="entry name" value="ACAS_N"/>
</dbReference>
<dbReference type="InterPro" id="IPR025110">
    <property type="entry name" value="AMP-bd_C"/>
</dbReference>
<dbReference type="InterPro" id="IPR045851">
    <property type="entry name" value="AMP-bd_C_sf"/>
</dbReference>
<dbReference type="InterPro" id="IPR020845">
    <property type="entry name" value="AMP-binding_CS"/>
</dbReference>
<dbReference type="InterPro" id="IPR000873">
    <property type="entry name" value="AMP-dep_synth/lig_dom"/>
</dbReference>
<dbReference type="InterPro" id="IPR042099">
    <property type="entry name" value="ANL_N_sf"/>
</dbReference>
<dbReference type="NCBIfam" id="TIGR02188">
    <property type="entry name" value="Ac_CoA_lig_AcsA"/>
    <property type="match status" value="1"/>
</dbReference>
<dbReference type="NCBIfam" id="NF001208">
    <property type="entry name" value="PRK00174.1"/>
    <property type="match status" value="1"/>
</dbReference>
<dbReference type="PANTHER" id="PTHR24095">
    <property type="entry name" value="ACETYL-COENZYME A SYNTHETASE"/>
    <property type="match status" value="1"/>
</dbReference>
<dbReference type="PANTHER" id="PTHR24095:SF14">
    <property type="entry name" value="ACETYL-COENZYME A SYNTHETASE 1"/>
    <property type="match status" value="1"/>
</dbReference>
<dbReference type="Pfam" id="PF16177">
    <property type="entry name" value="ACAS_N"/>
    <property type="match status" value="1"/>
</dbReference>
<dbReference type="Pfam" id="PF00501">
    <property type="entry name" value="AMP-binding"/>
    <property type="match status" value="1"/>
</dbReference>
<dbReference type="Pfam" id="PF13193">
    <property type="entry name" value="AMP-binding_C"/>
    <property type="match status" value="1"/>
</dbReference>
<dbReference type="SUPFAM" id="SSF56801">
    <property type="entry name" value="Acetyl-CoA synthetase-like"/>
    <property type="match status" value="1"/>
</dbReference>
<dbReference type="PROSITE" id="PS00455">
    <property type="entry name" value="AMP_BINDING"/>
    <property type="match status" value="1"/>
</dbReference>
<comment type="catalytic activity">
    <reaction>
        <text>acetate + ATP + CoA = acetyl-CoA + AMP + diphosphate</text>
        <dbReference type="Rhea" id="RHEA:23176"/>
        <dbReference type="ChEBI" id="CHEBI:30089"/>
        <dbReference type="ChEBI" id="CHEBI:30616"/>
        <dbReference type="ChEBI" id="CHEBI:33019"/>
        <dbReference type="ChEBI" id="CHEBI:57287"/>
        <dbReference type="ChEBI" id="CHEBI:57288"/>
        <dbReference type="ChEBI" id="CHEBI:456215"/>
        <dbReference type="EC" id="6.2.1.1"/>
    </reaction>
</comment>
<comment type="induction">
    <text>By acetate.</text>
</comment>
<comment type="similarity">
    <text evidence="2">Belongs to the ATP-dependent AMP-binding enzyme family.</text>
</comment>
<reference key="1">
    <citation type="journal article" date="1994" name="Mol. Gen. Genet.">
        <title>Isolation of the facA (acetyl-CoA synthetase) gene of Phycomyces blakesleeanus.</title>
        <authorList>
            <person name="Garre V."/>
            <person name="Murillo F.J."/>
            <person name="Torres-Martinez S."/>
        </authorList>
    </citation>
    <scope>NUCLEOTIDE SEQUENCE [GENOMIC DNA]</scope>
    <source>
        <strain>ATCC 8743b / DSM 1359 / FGSC 10004 / NBRC 33097 / NRRL 1555</strain>
    </source>
</reference>
<accession>Q01576</accession>
<protein>
    <recommendedName>
        <fullName>Acetyl-coenzyme A synthetase</fullName>
        <ecNumber>6.2.1.1</ecNumber>
    </recommendedName>
    <alternativeName>
        <fullName>Acetate--CoA ligase</fullName>
    </alternativeName>
    <alternativeName>
        <fullName>Acyl-activating enzyme</fullName>
    </alternativeName>
</protein>
<sequence>MLDKTTIDGQEDIVTHPVPKRLLNSAECPTPHVNSLEQYKSMWKESVEQPEKFFGNLGRELLSWSKPFETVQYGSFEAGDVAWFLEGELNASYNCVDRHAFKNPDKIAIIHEGDEPDQVRRITYGELLREVCRMANVLKGLGVRKGDPVAIYMPMIPETIVAILACARIGAIHSVVFAGFSAEILRDRVVDCATRVVLTSDEGRRGGKNIATKCIVDEALRDYENHSVEHVLVFRRTGSPVPWVQGRDVWWHEEMAKARTFCSPEPMSAEDPLFLLYTSGSTGTPKGILHTTGGYLLGVAATVKYIFDYQENDIYACMADIGWVTGHSYIVYGPLTLGATTVLFESTPTYPNPSRFWQLIEKHKITQFYTAPTAIRALQRLGDQWLDNIDMSSLRVLGSVGEPINREAWDWYNEKVGKGRCAVVDTYWQTETGSIIVSPLPGATPTKPGSATLPFFGIDPVLLDPTTGKELTATGQTGVLAIRKPRPSMARSVYNNHSRFVETYLKPYPGYYFTGDGALRDDDGYIWIRGRVDDVINVSGHRLSTSEIESALVNHEAVAESAVVGAHDDLTGQCIHAFVSLKPHIQIADGLEKVLTLQVRKTIGPFAAPRRIYIVSDHPKTRSGKIMRRILRKIVNGEHDQLGDISTLADPSIVAVLINKVQRLNTEANIYI</sequence>
<name>ACSA_PHYB8</name>
<keyword id="KW-0067">ATP-binding</keyword>
<keyword id="KW-0436">Ligase</keyword>
<keyword id="KW-0547">Nucleotide-binding</keyword>
<organism>
    <name type="scientific">Phycomyces blakesleeanus (strain ATCC 8743b / DSM 1359 / FGSC 10004 / NBRC 33097 / NRRL 1555)</name>
    <dbReference type="NCBI Taxonomy" id="763407"/>
    <lineage>
        <taxon>Eukaryota</taxon>
        <taxon>Fungi</taxon>
        <taxon>Fungi incertae sedis</taxon>
        <taxon>Mucoromycota</taxon>
        <taxon>Mucoromycotina</taxon>
        <taxon>Mucoromycetes</taxon>
        <taxon>Mucorales</taxon>
        <taxon>Phycomycetaceae</taxon>
        <taxon>Phycomyces</taxon>
    </lineage>
</organism>
<feature type="chain" id="PRO_0000208418" description="Acetyl-coenzyme A synthetase">
    <location>
        <begin position="1"/>
        <end position="672"/>
    </location>
</feature>
<feature type="binding site" evidence="1">
    <location>
        <begin position="205"/>
        <end position="208"/>
    </location>
    <ligand>
        <name>CoA</name>
        <dbReference type="ChEBI" id="CHEBI:57287"/>
    </ligand>
</feature>
<feature type="binding site" evidence="1">
    <location>
        <position position="325"/>
    </location>
    <ligand>
        <name>CoA</name>
        <dbReference type="ChEBI" id="CHEBI:57287"/>
    </ligand>
</feature>
<feature type="binding site" evidence="1">
    <location>
        <begin position="401"/>
        <end position="403"/>
    </location>
    <ligand>
        <name>ATP</name>
        <dbReference type="ChEBI" id="CHEBI:30616"/>
    </ligand>
</feature>
<feature type="binding site" evidence="1">
    <location>
        <begin position="425"/>
        <end position="430"/>
    </location>
    <ligand>
        <name>ATP</name>
        <dbReference type="ChEBI" id="CHEBI:30616"/>
    </ligand>
</feature>
<feature type="binding site" evidence="1">
    <location>
        <position position="516"/>
    </location>
    <ligand>
        <name>ATP</name>
        <dbReference type="ChEBI" id="CHEBI:30616"/>
    </ligand>
</feature>
<feature type="binding site" evidence="1">
    <location>
        <position position="531"/>
    </location>
    <ligand>
        <name>ATP</name>
        <dbReference type="ChEBI" id="CHEBI:30616"/>
    </ligand>
</feature>
<feature type="binding site" evidence="1">
    <location>
        <position position="539"/>
    </location>
    <ligand>
        <name>CoA</name>
        <dbReference type="ChEBI" id="CHEBI:57287"/>
    </ligand>
</feature>
<feature type="binding site" evidence="1">
    <location>
        <position position="542"/>
    </location>
    <ligand>
        <name>ATP</name>
        <dbReference type="ChEBI" id="CHEBI:30616"/>
    </ligand>
</feature>
<feature type="binding site" evidence="1">
    <location>
        <position position="600"/>
    </location>
    <ligand>
        <name>CoA</name>
        <dbReference type="ChEBI" id="CHEBI:57287"/>
    </ligand>
</feature>
<gene>
    <name type="primary">facA</name>
</gene>
<proteinExistence type="evidence at transcript level"/>